<gene>
    <name type="primary">RPL5</name>
</gene>
<keyword id="KW-0963">Cytoplasm</keyword>
<keyword id="KW-0539">Nucleus</keyword>
<keyword id="KW-0687">Ribonucleoprotein</keyword>
<keyword id="KW-0689">Ribosomal protein</keyword>
<keyword id="KW-0694">RNA-binding</keyword>
<keyword id="KW-0699">rRNA-binding</keyword>
<protein>
    <recommendedName>
        <fullName evidence="3">Large ribosomal subunit protein uL18</fullName>
    </recommendedName>
    <alternativeName>
        <fullName>60S ribosomal protein L5</fullName>
    </alternativeName>
</protein>
<proteinExistence type="evidence at transcript level"/>
<sequence length="293" mass="33965">MPFVKVIKNKAYFKRYQVKFRRRREGKTDYRARKRLVVQDKNKYNTPKYRIVIRFTNTDIICQIIYAKIEGDKVLVSAYAHELPRYGVKVGLTNYAAAYCTGLLLARRLLTNLGLADKYAGQTDIDGEDFNVEHMGDGPRPFRAFLDVGLTRTTTGNRVFAAMKGAVDGGIDIPHSPSRFVGYDEESSQLEADKLRQYIFGGHVSDYMKYLQEEDEEKYKAHFSRFIKEGITADSMEQMYRDAHAKIRANPAHEKKQPRDGLVKKRWNRAKMSLKQKRDRVKQKKAAYLKTLE</sequence>
<name>RL5_SUBDO</name>
<evidence type="ECO:0000250" key="1">
    <source>
        <dbReference type="UniProtKB" id="P26321"/>
    </source>
</evidence>
<evidence type="ECO:0000256" key="2">
    <source>
        <dbReference type="SAM" id="MobiDB-lite"/>
    </source>
</evidence>
<evidence type="ECO:0000305" key="3"/>
<organism>
    <name type="scientific">Suberites domuncula</name>
    <name type="common">Sponge</name>
    <dbReference type="NCBI Taxonomy" id="55567"/>
    <lineage>
        <taxon>Eukaryota</taxon>
        <taxon>Metazoa</taxon>
        <taxon>Porifera</taxon>
        <taxon>Demospongiae</taxon>
        <taxon>Heteroscleromorpha</taxon>
        <taxon>Suberitida</taxon>
        <taxon>Suberitidae</taxon>
        <taxon>Suberites</taxon>
    </lineage>
</organism>
<reference key="1">
    <citation type="journal article" date="2006" name="Gene">
        <title>The complete set of ribosomal proteins from the marine sponge Suberites domuncula.</title>
        <authorList>
            <person name="Perina D."/>
            <person name="Cetkovic H."/>
            <person name="Harcet M."/>
            <person name="Premzl M."/>
            <person name="Lukic-Bilela L."/>
            <person name="Mueller W.E.G."/>
            <person name="Gamulin V."/>
        </authorList>
    </citation>
    <scope>NUCLEOTIDE SEQUENCE [MRNA]</scope>
</reference>
<comment type="function">
    <text evidence="1">Component of the ribosome, a large ribonucleoprotein complex responsible for the synthesis of proteins in the cell. The small ribosomal subunit (SSU) binds messenger RNAs (mRNAs) and translates the encoded message by selecting cognate aminoacyl-transfer RNA (tRNA) molecules. The large subunit (LSU) contains the ribosomal catalytic site termed the peptidyl transferase center (PTC), which catalyzes the formation of peptide bonds, thereby polymerizing the amino acids delivered by tRNAs into a polypeptide chain. The nascent polypeptides leave the ribosome through a tunnel in the LSU and interact with protein factors that function in enzymatic processing, targeting, and the membrane insertion of nascent chains at the exit of the ribosomal tunnel.</text>
</comment>
<comment type="subunit">
    <text evidence="1">Component of the large ribosomal subunit (LSU).</text>
</comment>
<comment type="subcellular location">
    <subcellularLocation>
        <location evidence="1">Cytoplasm</location>
    </subcellularLocation>
    <subcellularLocation>
        <location evidence="1">Nucleus</location>
    </subcellularLocation>
</comment>
<comment type="similarity">
    <text evidence="3">Belongs to the universal ribosomal protein uL18 family.</text>
</comment>
<dbReference type="EMBL" id="AY857416">
    <property type="protein sequence ID" value="AAX48835.1"/>
    <property type="molecule type" value="mRNA"/>
</dbReference>
<dbReference type="SMR" id="Q4KTI3"/>
<dbReference type="GO" id="GO:0022625">
    <property type="term" value="C:cytosolic large ribosomal subunit"/>
    <property type="evidence" value="ECO:0007669"/>
    <property type="project" value="TreeGrafter"/>
</dbReference>
<dbReference type="GO" id="GO:0005634">
    <property type="term" value="C:nucleus"/>
    <property type="evidence" value="ECO:0007669"/>
    <property type="project" value="UniProtKB-SubCell"/>
</dbReference>
<dbReference type="GO" id="GO:0008097">
    <property type="term" value="F:5S rRNA binding"/>
    <property type="evidence" value="ECO:0007669"/>
    <property type="project" value="InterPro"/>
</dbReference>
<dbReference type="GO" id="GO:0003735">
    <property type="term" value="F:structural constituent of ribosome"/>
    <property type="evidence" value="ECO:0007669"/>
    <property type="project" value="InterPro"/>
</dbReference>
<dbReference type="GO" id="GO:0000027">
    <property type="term" value="P:ribosomal large subunit assembly"/>
    <property type="evidence" value="ECO:0007669"/>
    <property type="project" value="TreeGrafter"/>
</dbReference>
<dbReference type="GO" id="GO:0006412">
    <property type="term" value="P:translation"/>
    <property type="evidence" value="ECO:0007669"/>
    <property type="project" value="InterPro"/>
</dbReference>
<dbReference type="CDD" id="cd00432">
    <property type="entry name" value="Ribosomal_L18_L5e"/>
    <property type="match status" value="1"/>
</dbReference>
<dbReference type="FunFam" id="3.30.420.100:FF:000002">
    <property type="entry name" value="60S ribosomal protein L5"/>
    <property type="match status" value="1"/>
</dbReference>
<dbReference type="Gene3D" id="3.30.420.100">
    <property type="match status" value="1"/>
</dbReference>
<dbReference type="HAMAP" id="MF_01337_A">
    <property type="entry name" value="Ribosomal_uL18_A"/>
    <property type="match status" value="1"/>
</dbReference>
<dbReference type="InterPro" id="IPR005485">
    <property type="entry name" value="Rbsml_uL18_euk"/>
</dbReference>
<dbReference type="InterPro" id="IPR025607">
    <property type="entry name" value="Ribosomal_uL18_C_euk"/>
</dbReference>
<dbReference type="PANTHER" id="PTHR23410:SF12">
    <property type="entry name" value="LARGE RIBOSOMAL SUBUNIT PROTEIN UL18"/>
    <property type="match status" value="1"/>
</dbReference>
<dbReference type="PANTHER" id="PTHR23410">
    <property type="entry name" value="RIBOSOMAL PROTEIN L5-RELATED"/>
    <property type="match status" value="1"/>
</dbReference>
<dbReference type="Pfam" id="PF14204">
    <property type="entry name" value="Ribosomal_L18_c"/>
    <property type="match status" value="1"/>
</dbReference>
<dbReference type="Pfam" id="PF17144">
    <property type="entry name" value="Ribosomal_L5e"/>
    <property type="match status" value="1"/>
</dbReference>
<dbReference type="PRINTS" id="PR00058">
    <property type="entry name" value="RIBOSOMALL5"/>
</dbReference>
<dbReference type="SUPFAM" id="SSF53137">
    <property type="entry name" value="Translational machinery components"/>
    <property type="match status" value="1"/>
</dbReference>
<accession>Q4KTI3</accession>
<feature type="chain" id="PRO_0000291566" description="Large ribosomal subunit protein uL18">
    <location>
        <begin position="1"/>
        <end position="293"/>
    </location>
</feature>
<feature type="region of interest" description="Disordered" evidence="2">
    <location>
        <begin position="247"/>
        <end position="283"/>
    </location>
</feature>
<feature type="compositionally biased region" description="Basic and acidic residues" evidence="2">
    <location>
        <begin position="247"/>
        <end position="263"/>
    </location>
</feature>
<feature type="compositionally biased region" description="Basic residues" evidence="2">
    <location>
        <begin position="264"/>
        <end position="283"/>
    </location>
</feature>